<name>HS71B_PIG</name>
<organism>
    <name type="scientific">Sus scrofa</name>
    <name type="common">Pig</name>
    <dbReference type="NCBI Taxonomy" id="9823"/>
    <lineage>
        <taxon>Eukaryota</taxon>
        <taxon>Metazoa</taxon>
        <taxon>Chordata</taxon>
        <taxon>Craniata</taxon>
        <taxon>Vertebrata</taxon>
        <taxon>Euteleostomi</taxon>
        <taxon>Mammalia</taxon>
        <taxon>Eutheria</taxon>
        <taxon>Laurasiatheria</taxon>
        <taxon>Artiodactyla</taxon>
        <taxon>Suina</taxon>
        <taxon>Suidae</taxon>
        <taxon>Sus</taxon>
    </lineage>
</organism>
<gene>
    <name type="primary">HSPA1B</name>
</gene>
<comment type="function">
    <text evidence="2">Molecular chaperone implicated in a wide variety of cellular processes, including protection of the proteome from stress, folding and transport of newly synthesized polypeptides, activation of proteolysis of misfolded proteins and the formation and dissociation of protein complexes. Plays a pivotal role in the protein quality control system, ensuring the correct folding of proteins, the re-folding of misfolded proteins and controlling the targeting of proteins for subsequent degradation. This is achieved through cycles of ATP binding, ATP hydrolysis and ADP release, mediated by co-chaperones. The co-chaperones have been shown to not only regulate different steps of the ATPase cycle, but they also have an individual specificity such that one co-chaperone may promote folding of a substrate while another may promote degradation. The affinity for polypeptides is regulated by its nucleotide bound state. In the ATP-bound form, it has a low affinity for substrate proteins. However, upon hydrolysis of the ATP to ADP, it undergoes a conformational change that increases its affinity for substrate proteins. It goes through repeated cycles of ATP hydrolysis and nucleotide exchange, which permits cycles of substrate binding and release. The co-chaperones are of three types: J-domain co-chaperones such as HSP40s (stimulate ATPase hydrolysis by HSP70), the nucleotide exchange factors (NEF) such as BAG1/2/3 (facilitate conversion of HSP70 from the ADP-bound to the ATP-bound state thereby promoting substrate release), and the TPR domain chaperones such as HOPX and STUB1. Maintains protein homeostasis during cellular stress through two opposing mechanisms: protein refolding and degradation. Its acetylation/deacetylation state determines whether it functions in protein refolding or protein degradation by controlling the competitive binding of co-chaperones HOPX and STUB1. During the early stress response, the acetylated form binds to HOPX which assists in chaperone-mediated protein refolding, thereafter, it is deacetylated and binds to ubiquitin ligase STUB1 that promotes ubiquitin-mediated protein degradation. Regulates centrosome integrity during mitosis, and is required for the maintenance of a functional mitotic centrosome that supports the assembly of a bipolar mitotic spindle. Enhances STUB1-mediated SMAD3 ubiquitination and degradation and facilitates STUB1-mediated inhibition of TGF-beta signaling. Essential for STUB1-mediated ubiquitination and degradation of FOXP3 in regulatory T-cells (Treg) during inflammation.</text>
</comment>
<comment type="subunit">
    <text evidence="2">May be an auxiliary component of the CatSper complex. Identified in a IGF2BP1-dependent mRNP granule complex containing untranslated mRNAs. Interacts with CHCHD3, DNAJC7, IRAK1BP1, PPP5C and TSC2. Interacts with TERT; the interaction occurs in the absence of the RNA component, TERC, and dissociates once the TERT complex has formed. Interacts with METTL21A. Interacts with TRIM5 (via B30.2/SPRY domain). Interacts with PRKN. Interacts with FOXP3. Interacts with NOD2; the interaction enhances NOD2 stability. Interacts with DNAJC9 (via J domain). Interacts with ATF5; the interaction protects ATF5 from degradation via proteasome-dependent and caspase-dependent processes. Interacts with NAA10, HSP40, HSP90 and HDAC4. The acetylated form and the non-acetylated form interact with HOPX and STUB1 respectively. Interacts with NEDD1 and SMAD3. Interacts (via NBD) with BAG1, BAG2, BAG3 and HSPH1/HSP105. Interacts with DNAJC8.</text>
</comment>
<comment type="subcellular location">
    <subcellularLocation>
        <location evidence="2">Cytoplasm</location>
    </subcellularLocation>
    <subcellularLocation>
        <location evidence="2">Cytoplasm</location>
        <location evidence="2">Cytoskeleton</location>
        <location evidence="2">Microtubule organizing center</location>
        <location evidence="2">Centrosome</location>
    </subcellularLocation>
    <text evidence="2">Localized in cytoplasmic mRNP granules containing untranslated mRNAs.</text>
</comment>
<comment type="tissue specificity">
    <text>Testis-specific.</text>
</comment>
<comment type="domain">
    <text evidence="2">The N-terminal nucleotide binding domain (NBD) (also known as the ATPase domain) is responsible for binding and hydrolyzing ATP. The C-terminal substrate-binding domain (SBD) (also known as peptide-binding domain) binds to the client/substrate proteins. The two domains are allosterically coupled so that, when ATP is bound to the NBD, the SBD binds relatively weakly to clients. When ADP is bound in the NBD, a conformational change enhances the affinity of the SBD for client proteins.</text>
</comment>
<comment type="PTM">
    <text evidence="2">In response to cellular stress, acetylated at Lys-77 by NA110 and then gradually deacetylated by HDAC4 at later stages. Acetylation enhances its chaperone activity and also determines whether it will function as a chaperone for protein refolding or degradation by controlling its binding to co-chaperones HOPX and STUB1. The acetylated form and the non-acetylated form bind to HOPX and STUB1 respectively. Acetylation also protects cells against various types of cellular stress.</text>
</comment>
<comment type="similarity">
    <text evidence="5">Belongs to the heat shock protein 70 family.</text>
</comment>
<reference key="1">
    <citation type="submission" date="2003-11" db="EMBL/GenBank/DDBJ databases">
        <title>Porcine heat shock protein 70.2 gene.</title>
        <authorList>
            <person name="Chen M.Y."/>
            <person name="Lee W.C."/>
        </authorList>
    </citation>
    <scope>NUCLEOTIDE SEQUENCE [MRNA]</scope>
</reference>
<proteinExistence type="evidence at transcript level"/>
<accession>Q6S4N2</accession>
<dbReference type="EMBL" id="AY466608">
    <property type="protein sequence ID" value="AAR30953.1"/>
    <property type="molecule type" value="mRNA"/>
</dbReference>
<dbReference type="RefSeq" id="NP_998931.1">
    <property type="nucleotide sequence ID" value="NM_213766.1"/>
</dbReference>
<dbReference type="SMR" id="Q6S4N2"/>
<dbReference type="FunCoup" id="Q6S4N2">
    <property type="interactions" value="1065"/>
</dbReference>
<dbReference type="GlyGen" id="Q6S4N2">
    <property type="glycosylation" value="1 site"/>
</dbReference>
<dbReference type="PaxDb" id="9823-ENSSSCP00000020097"/>
<dbReference type="PeptideAtlas" id="Q6S4N2"/>
<dbReference type="Ensembl" id="ENSSSCT00000026311.5">
    <property type="protein sequence ID" value="ENSSSCP00000058891.4"/>
    <property type="gene ID" value="ENSSSCG00000029160.5"/>
</dbReference>
<dbReference type="GeneID" id="396648"/>
<dbReference type="KEGG" id="ssc:396648"/>
<dbReference type="CTD" id="100535101"/>
<dbReference type="eggNOG" id="KOG0101">
    <property type="taxonomic scope" value="Eukaryota"/>
</dbReference>
<dbReference type="GeneTree" id="ENSGT00940000161215"/>
<dbReference type="InParanoid" id="Q6S4N2"/>
<dbReference type="OrthoDB" id="2401965at2759"/>
<dbReference type="Reactome" id="R-SSC-3371453">
    <property type="pathway name" value="Regulation of HSF1-mediated heat shock response"/>
</dbReference>
<dbReference type="Reactome" id="R-SSC-3371497">
    <property type="pathway name" value="HSP90 chaperone cycle for steroid hormone receptors (SHR) in the presence of ligand"/>
</dbReference>
<dbReference type="Reactome" id="R-SSC-3371568">
    <property type="pathway name" value="Attenuation phase"/>
</dbReference>
<dbReference type="Reactome" id="R-SSC-3371571">
    <property type="pathway name" value="HSF1-dependent transactivation"/>
</dbReference>
<dbReference type="Reactome" id="R-SSC-450408">
    <property type="pathway name" value="AUF1 (hnRNP D0) binds and destabilizes mRNA"/>
</dbReference>
<dbReference type="Reactome" id="R-SSC-6798695">
    <property type="pathway name" value="Neutrophil degranulation"/>
</dbReference>
<dbReference type="Reactome" id="R-SSC-9833482">
    <property type="pathway name" value="PKR-mediated signaling"/>
</dbReference>
<dbReference type="Reactome" id="R-SSC-9841251">
    <property type="pathway name" value="Mitochondrial unfolded protein response (UPRmt)"/>
</dbReference>
<dbReference type="PRO" id="PR:Q6S4N2"/>
<dbReference type="Proteomes" id="UP000008227">
    <property type="component" value="Unplaced"/>
</dbReference>
<dbReference type="Proteomes" id="UP000314985">
    <property type="component" value="Unplaced"/>
</dbReference>
<dbReference type="Proteomes" id="UP000694570">
    <property type="component" value="Unplaced"/>
</dbReference>
<dbReference type="Proteomes" id="UP000694571">
    <property type="component" value="Unplaced"/>
</dbReference>
<dbReference type="Proteomes" id="UP000694720">
    <property type="component" value="Unplaced"/>
</dbReference>
<dbReference type="Proteomes" id="UP000694722">
    <property type="component" value="Unplaced"/>
</dbReference>
<dbReference type="Proteomes" id="UP000694723">
    <property type="component" value="Unplaced"/>
</dbReference>
<dbReference type="Proteomes" id="UP000694724">
    <property type="component" value="Unplaced"/>
</dbReference>
<dbReference type="Proteomes" id="UP000694725">
    <property type="component" value="Unplaced"/>
</dbReference>
<dbReference type="Proteomes" id="UP000694726">
    <property type="component" value="Unplaced"/>
</dbReference>
<dbReference type="Proteomes" id="UP000694727">
    <property type="component" value="Unplaced"/>
</dbReference>
<dbReference type="Proteomes" id="UP000694728">
    <property type="component" value="Unplaced"/>
</dbReference>
<dbReference type="GO" id="GO:0005813">
    <property type="term" value="C:centrosome"/>
    <property type="evidence" value="ECO:0000250"/>
    <property type="project" value="UniProtKB"/>
</dbReference>
<dbReference type="GO" id="GO:0005737">
    <property type="term" value="C:cytoplasm"/>
    <property type="evidence" value="ECO:0000318"/>
    <property type="project" value="GO_Central"/>
</dbReference>
<dbReference type="GO" id="GO:0005829">
    <property type="term" value="C:cytosol"/>
    <property type="evidence" value="ECO:0000318"/>
    <property type="project" value="GO_Central"/>
</dbReference>
<dbReference type="GO" id="GO:0005634">
    <property type="term" value="C:nucleus"/>
    <property type="evidence" value="ECO:0000318"/>
    <property type="project" value="GO_Central"/>
</dbReference>
<dbReference type="GO" id="GO:0005886">
    <property type="term" value="C:plasma membrane"/>
    <property type="evidence" value="ECO:0000318"/>
    <property type="project" value="GO_Central"/>
</dbReference>
<dbReference type="GO" id="GO:0005524">
    <property type="term" value="F:ATP binding"/>
    <property type="evidence" value="ECO:0007669"/>
    <property type="project" value="UniProtKB-KW"/>
</dbReference>
<dbReference type="GO" id="GO:0016887">
    <property type="term" value="F:ATP hydrolysis activity"/>
    <property type="evidence" value="ECO:0000318"/>
    <property type="project" value="GO_Central"/>
</dbReference>
<dbReference type="GO" id="GO:0140662">
    <property type="term" value="F:ATP-dependent protein folding chaperone"/>
    <property type="evidence" value="ECO:0007669"/>
    <property type="project" value="InterPro"/>
</dbReference>
<dbReference type="GO" id="GO:0031072">
    <property type="term" value="F:heat shock protein binding"/>
    <property type="evidence" value="ECO:0000318"/>
    <property type="project" value="GO_Central"/>
</dbReference>
<dbReference type="GO" id="GO:0044183">
    <property type="term" value="F:protein folding chaperone"/>
    <property type="evidence" value="ECO:0000318"/>
    <property type="project" value="GO_Central"/>
</dbReference>
<dbReference type="GO" id="GO:0051085">
    <property type="term" value="P:chaperone cofactor-dependent protein refolding"/>
    <property type="evidence" value="ECO:0000318"/>
    <property type="project" value="GO_Central"/>
</dbReference>
<dbReference type="GO" id="GO:0090063">
    <property type="term" value="P:positive regulation of microtubule nucleation"/>
    <property type="evidence" value="ECO:0000250"/>
    <property type="project" value="UniProtKB"/>
</dbReference>
<dbReference type="GO" id="GO:0032436">
    <property type="term" value="P:positive regulation of proteasomal ubiquitin-dependent protein catabolic process"/>
    <property type="evidence" value="ECO:0000318"/>
    <property type="project" value="GO_Central"/>
</dbReference>
<dbReference type="GO" id="GO:0042026">
    <property type="term" value="P:protein refolding"/>
    <property type="evidence" value="ECO:0000250"/>
    <property type="project" value="UniProtKB"/>
</dbReference>
<dbReference type="GO" id="GO:1901673">
    <property type="term" value="P:regulation of mitotic spindle assembly"/>
    <property type="evidence" value="ECO:0000250"/>
    <property type="project" value="UniProtKB"/>
</dbReference>
<dbReference type="CDD" id="cd10233">
    <property type="entry name" value="ASKHA_NBD_HSP70_HSPA1"/>
    <property type="match status" value="1"/>
</dbReference>
<dbReference type="FunFam" id="2.60.34.10:FF:000002">
    <property type="entry name" value="Heat shock 70 kDa"/>
    <property type="match status" value="1"/>
</dbReference>
<dbReference type="FunFam" id="3.30.420.40:FF:000172">
    <property type="entry name" value="Heat shock 70 kDa protein"/>
    <property type="match status" value="1"/>
</dbReference>
<dbReference type="FunFam" id="3.30.30.30:FF:000001">
    <property type="entry name" value="heat shock 70 kDa protein-like"/>
    <property type="match status" value="1"/>
</dbReference>
<dbReference type="FunFam" id="3.30.420.40:FF:000028">
    <property type="entry name" value="heat shock 70 kDa protein-like"/>
    <property type="match status" value="1"/>
</dbReference>
<dbReference type="FunFam" id="3.30.420.40:FF:000135">
    <property type="entry name" value="Heat shock cognate 71 kDa protein"/>
    <property type="match status" value="1"/>
</dbReference>
<dbReference type="FunFam" id="3.90.640.10:FF:000134">
    <property type="entry name" value="Heat shock cognate 71 kDa protein"/>
    <property type="match status" value="1"/>
</dbReference>
<dbReference type="FunFam" id="1.20.1270.10:FF:000003">
    <property type="entry name" value="heat shock cognate 71 kDa protein-like"/>
    <property type="match status" value="1"/>
</dbReference>
<dbReference type="FunFam" id="3.30.420.40:FF:000026">
    <property type="entry name" value="Heat shock protein 70"/>
    <property type="match status" value="1"/>
</dbReference>
<dbReference type="Gene3D" id="1.20.1270.10">
    <property type="match status" value="1"/>
</dbReference>
<dbReference type="Gene3D" id="3.30.30.30">
    <property type="match status" value="1"/>
</dbReference>
<dbReference type="Gene3D" id="3.30.420.40">
    <property type="match status" value="2"/>
</dbReference>
<dbReference type="Gene3D" id="3.90.640.10">
    <property type="entry name" value="Actin, Chain A, domain 4"/>
    <property type="match status" value="1"/>
</dbReference>
<dbReference type="Gene3D" id="2.60.34.10">
    <property type="entry name" value="Substrate Binding Domain Of DNAk, Chain A, domain 1"/>
    <property type="match status" value="1"/>
</dbReference>
<dbReference type="InterPro" id="IPR043129">
    <property type="entry name" value="ATPase_NBD"/>
</dbReference>
<dbReference type="InterPro" id="IPR018181">
    <property type="entry name" value="Heat_shock_70_CS"/>
</dbReference>
<dbReference type="InterPro" id="IPR029048">
    <property type="entry name" value="HSP70_C_sf"/>
</dbReference>
<dbReference type="InterPro" id="IPR029047">
    <property type="entry name" value="HSP70_peptide-bd_sf"/>
</dbReference>
<dbReference type="InterPro" id="IPR013126">
    <property type="entry name" value="Hsp_70_fam"/>
</dbReference>
<dbReference type="NCBIfam" id="NF001413">
    <property type="entry name" value="PRK00290.1"/>
    <property type="match status" value="1"/>
</dbReference>
<dbReference type="PANTHER" id="PTHR19375">
    <property type="entry name" value="HEAT SHOCK PROTEIN 70KDA"/>
    <property type="match status" value="1"/>
</dbReference>
<dbReference type="Pfam" id="PF00012">
    <property type="entry name" value="HSP70"/>
    <property type="match status" value="1"/>
</dbReference>
<dbReference type="PRINTS" id="PR00301">
    <property type="entry name" value="HEATSHOCK70"/>
</dbReference>
<dbReference type="SUPFAM" id="SSF53067">
    <property type="entry name" value="Actin-like ATPase domain"/>
    <property type="match status" value="2"/>
</dbReference>
<dbReference type="SUPFAM" id="SSF100934">
    <property type="entry name" value="Heat shock protein 70kD (HSP70), C-terminal subdomain"/>
    <property type="match status" value="1"/>
</dbReference>
<dbReference type="SUPFAM" id="SSF100920">
    <property type="entry name" value="Heat shock protein 70kD (HSP70), peptide-binding domain"/>
    <property type="match status" value="1"/>
</dbReference>
<dbReference type="PROSITE" id="PS00297">
    <property type="entry name" value="HSP70_1"/>
    <property type="match status" value="1"/>
</dbReference>
<dbReference type="PROSITE" id="PS00329">
    <property type="entry name" value="HSP70_2"/>
    <property type="match status" value="1"/>
</dbReference>
<dbReference type="PROSITE" id="PS01036">
    <property type="entry name" value="HSP70_3"/>
    <property type="match status" value="1"/>
</dbReference>
<protein>
    <recommendedName>
        <fullName>Heat shock 70 kDa protein 1B</fullName>
    </recommendedName>
    <alternativeName>
        <fullName>Heat shock 70 kDa protein 2</fullName>
        <shortName>HSP70.2</shortName>
    </alternativeName>
</protein>
<evidence type="ECO:0000250" key="1"/>
<evidence type="ECO:0000250" key="2">
    <source>
        <dbReference type="UniProtKB" id="P0DMV9"/>
    </source>
</evidence>
<evidence type="ECO:0000250" key="3">
    <source>
        <dbReference type="UniProtKB" id="P11142"/>
    </source>
</evidence>
<evidence type="ECO:0000256" key="4">
    <source>
        <dbReference type="SAM" id="MobiDB-lite"/>
    </source>
</evidence>
<evidence type="ECO:0000305" key="5"/>
<sequence>MAKSVAIGIDLGTTYSCVGVFQHGKVEIIANDQGNRTTPSYVAFTDTERLIGDAAKNQVALNPQNTVFDAKRLIGRKFGDPVVQADMKHWPFRVINDGDKPKVQVSYKGETKAFYPEEISSMVLTKMKEIAEAYLGHPVSNAVITVPAYFNDSQRQATKDAGVIAGLNVLRIINEPTAAAIAYGLDRTGKGERNVLIFDLGGGTFDVSILTIDDGIFEVKATAGDTHLGGEDFDNRLVNHFVEEFKRKHKKDISQNKRAVRRLRTACERAKRTLSSSTQASLEIDSLFEGIDFYTSITRARFEELCSDLFRSTLEPVEKALRDAKLDKAQIHDLVLVGGSTRIPKVQKLLQDFFNGRDLNKSINPDEAVAYGAAVQAAILMGDKSENVQDLLLLDVAPLSLGLETAGGVMTALIKRNSTIPTKQTQIFTTYSDNQPGVLIQVYEGERAMTRDNNLLGRFELSGIPPAPRGVPQIEVTFDIDANGILNVTATDKSTGKANKITITNDKGRLSKEEIERMVQEAEKYKAEDEIQRERVSAKNALESYAFNMKSAVEDEGLKGKISEADKKKVLDKCQEVISWLDANTLAEKDEFEHKRKELEQVCNPIISGLYQGAGGPGAGGFGAQAPKGGSGSGPTIEEVD</sequence>
<keyword id="KW-0007">Acetylation</keyword>
<keyword id="KW-0067">ATP-binding</keyword>
<keyword id="KW-0143">Chaperone</keyword>
<keyword id="KW-0963">Cytoplasm</keyword>
<keyword id="KW-0206">Cytoskeleton</keyword>
<keyword id="KW-0488">Methylation</keyword>
<keyword id="KW-0547">Nucleotide-binding</keyword>
<keyword id="KW-0597">Phosphoprotein</keyword>
<keyword id="KW-1185">Reference proteome</keyword>
<keyword id="KW-0346">Stress response</keyword>
<feature type="initiator methionine" description="Removed" evidence="2">
    <location>
        <position position="1"/>
    </location>
</feature>
<feature type="chain" id="PRO_0000078253" description="Heat shock 70 kDa protein 1B">
    <location>
        <begin position="2"/>
        <end position="641"/>
    </location>
</feature>
<feature type="region of interest" description="Nucleotide-binding domain (NBD)" evidence="3">
    <location>
        <begin position="2"/>
        <end position="386"/>
    </location>
</feature>
<feature type="region of interest" description="Substrate-binding domain (SBD)" evidence="3">
    <location>
        <begin position="394"/>
        <end position="509"/>
    </location>
</feature>
<feature type="region of interest" description="Disordered" evidence="4">
    <location>
        <begin position="617"/>
        <end position="641"/>
    </location>
</feature>
<feature type="compositionally biased region" description="Gly residues" evidence="4">
    <location>
        <begin position="617"/>
        <end position="633"/>
    </location>
</feature>
<feature type="binding site" evidence="1">
    <location>
        <begin position="12"/>
        <end position="15"/>
    </location>
    <ligand>
        <name>ATP</name>
        <dbReference type="ChEBI" id="CHEBI:30616"/>
    </ligand>
</feature>
<feature type="binding site" evidence="1">
    <location>
        <position position="71"/>
    </location>
    <ligand>
        <name>ATP</name>
        <dbReference type="ChEBI" id="CHEBI:30616"/>
    </ligand>
</feature>
<feature type="binding site" evidence="1">
    <location>
        <begin position="202"/>
        <end position="204"/>
    </location>
    <ligand>
        <name>ATP</name>
        <dbReference type="ChEBI" id="CHEBI:30616"/>
    </ligand>
</feature>
<feature type="binding site" evidence="1">
    <location>
        <begin position="268"/>
        <end position="275"/>
    </location>
    <ligand>
        <name>ATP</name>
        <dbReference type="ChEBI" id="CHEBI:30616"/>
    </ligand>
</feature>
<feature type="binding site" evidence="1">
    <location>
        <begin position="339"/>
        <end position="342"/>
    </location>
    <ligand>
        <name>ATP</name>
        <dbReference type="ChEBI" id="CHEBI:30616"/>
    </ligand>
</feature>
<feature type="modified residue" description="N-acetylalanine" evidence="2">
    <location>
        <position position="2"/>
    </location>
</feature>
<feature type="modified residue" description="N6-acetyllysine" evidence="2">
    <location>
        <position position="77"/>
    </location>
</feature>
<feature type="modified residue" description="N6-acetyllysine" evidence="2">
    <location>
        <position position="108"/>
    </location>
</feature>
<feature type="modified residue" description="N6-acetyllysine" evidence="2">
    <location>
        <position position="246"/>
    </location>
</feature>
<feature type="modified residue" description="N6-acetyllysine" evidence="2">
    <location>
        <position position="348"/>
    </location>
</feature>
<feature type="modified residue" description="Omega-N-methylarginine" evidence="2">
    <location>
        <position position="469"/>
    </location>
</feature>
<feature type="modified residue" description="N6,N6,N6-trimethyllysine; by METTL21A; alternate" evidence="2">
    <location>
        <position position="561"/>
    </location>
</feature>
<feature type="modified residue" description="N6,N6-dimethyllysine; alternate" evidence="2">
    <location>
        <position position="561"/>
    </location>
</feature>
<feature type="modified residue" description="Phosphoserine" evidence="2">
    <location>
        <position position="631"/>
    </location>
</feature>
<feature type="modified residue" description="Phosphoserine" evidence="2">
    <location>
        <position position="633"/>
    </location>
</feature>
<feature type="modified residue" description="Phosphothreonine" evidence="2">
    <location>
        <position position="636"/>
    </location>
</feature>